<organism>
    <name type="scientific">Streptomyces griseus subsp. griseus (strain JCM 4626 / CBS 651.72 / NBRC 13350 / KCC S-0626 / ISP 5235)</name>
    <dbReference type="NCBI Taxonomy" id="455632"/>
    <lineage>
        <taxon>Bacteria</taxon>
        <taxon>Bacillati</taxon>
        <taxon>Actinomycetota</taxon>
        <taxon>Actinomycetes</taxon>
        <taxon>Kitasatosporales</taxon>
        <taxon>Streptomycetaceae</taxon>
        <taxon>Streptomyces</taxon>
    </lineage>
</organism>
<evidence type="ECO:0000255" key="1">
    <source>
        <dbReference type="HAMAP-Rule" id="MF_00386"/>
    </source>
</evidence>
<evidence type="ECO:0000256" key="2">
    <source>
        <dbReference type="SAM" id="MobiDB-lite"/>
    </source>
</evidence>
<sequence length="119" mass="12933">MKYPLLALIKLYQWTISPLLGPVCRYYPSCSHYGYTSIDRHGAIKGTALTAWRILRCNPWSPGGVDHVPPRKRPRWHELLRNALRGEKGGESAADVPSGGSVSEPPGPAAETSPNAQGA</sequence>
<gene>
    <name type="ordered locus">SGR_3697</name>
</gene>
<accession>B1VPE7</accession>
<proteinExistence type="inferred from homology"/>
<feature type="chain" id="PRO_1000197794" description="Putative membrane protein insertion efficiency factor">
    <location>
        <begin position="1"/>
        <end position="119"/>
    </location>
</feature>
<feature type="region of interest" description="Disordered" evidence="2">
    <location>
        <begin position="82"/>
        <end position="119"/>
    </location>
</feature>
<keyword id="KW-1003">Cell membrane</keyword>
<keyword id="KW-0472">Membrane</keyword>
<protein>
    <recommendedName>
        <fullName evidence="1">Putative membrane protein insertion efficiency factor</fullName>
    </recommendedName>
</protein>
<dbReference type="EMBL" id="AP009493">
    <property type="protein sequence ID" value="BAG20526.1"/>
    <property type="molecule type" value="Genomic_DNA"/>
</dbReference>
<dbReference type="KEGG" id="sgr:SGR_3697"/>
<dbReference type="eggNOG" id="COG0759">
    <property type="taxonomic scope" value="Bacteria"/>
</dbReference>
<dbReference type="HOGENOM" id="CLU_144811_2_0_11"/>
<dbReference type="Proteomes" id="UP000001685">
    <property type="component" value="Chromosome"/>
</dbReference>
<dbReference type="GO" id="GO:0005886">
    <property type="term" value="C:plasma membrane"/>
    <property type="evidence" value="ECO:0007669"/>
    <property type="project" value="UniProtKB-SubCell"/>
</dbReference>
<dbReference type="HAMAP" id="MF_00386">
    <property type="entry name" value="UPF0161_YidD"/>
    <property type="match status" value="1"/>
</dbReference>
<dbReference type="InterPro" id="IPR002696">
    <property type="entry name" value="Membr_insert_effic_factor_YidD"/>
</dbReference>
<dbReference type="NCBIfam" id="TIGR00278">
    <property type="entry name" value="membrane protein insertion efficiency factor YidD"/>
    <property type="match status" value="1"/>
</dbReference>
<dbReference type="PANTHER" id="PTHR33383">
    <property type="entry name" value="MEMBRANE PROTEIN INSERTION EFFICIENCY FACTOR-RELATED"/>
    <property type="match status" value="1"/>
</dbReference>
<dbReference type="PANTHER" id="PTHR33383:SF1">
    <property type="entry name" value="MEMBRANE PROTEIN INSERTION EFFICIENCY FACTOR-RELATED"/>
    <property type="match status" value="1"/>
</dbReference>
<dbReference type="Pfam" id="PF01809">
    <property type="entry name" value="YidD"/>
    <property type="match status" value="1"/>
</dbReference>
<dbReference type="SMART" id="SM01234">
    <property type="entry name" value="Haemolytic"/>
    <property type="match status" value="1"/>
</dbReference>
<comment type="function">
    <text evidence="1">Could be involved in insertion of integral membrane proteins into the membrane.</text>
</comment>
<comment type="subcellular location">
    <subcellularLocation>
        <location evidence="1">Cell membrane</location>
        <topology evidence="1">Peripheral membrane protein</topology>
        <orientation evidence="1">Cytoplasmic side</orientation>
    </subcellularLocation>
</comment>
<comment type="similarity">
    <text evidence="1">Belongs to the UPF0161 family.</text>
</comment>
<name>YIDD_STRGG</name>
<reference key="1">
    <citation type="journal article" date="2008" name="J. Bacteriol.">
        <title>Genome sequence of the streptomycin-producing microorganism Streptomyces griseus IFO 13350.</title>
        <authorList>
            <person name="Ohnishi Y."/>
            <person name="Ishikawa J."/>
            <person name="Hara H."/>
            <person name="Suzuki H."/>
            <person name="Ikenoya M."/>
            <person name="Ikeda H."/>
            <person name="Yamashita A."/>
            <person name="Hattori M."/>
            <person name="Horinouchi S."/>
        </authorList>
    </citation>
    <scope>NUCLEOTIDE SEQUENCE [LARGE SCALE GENOMIC DNA]</scope>
    <source>
        <strain>JCM 4626 / CBS 651.72 / NBRC 13350 / KCC S-0626 / ISP 5235</strain>
    </source>
</reference>